<feature type="transit peptide" description="Chloroplast" evidence="2">
    <location>
        <begin position="1"/>
        <end position="59"/>
    </location>
</feature>
<feature type="chain" id="PRO_0000016555" description="Adenylate kinase 2, chloroplastic">
    <location>
        <begin position="60"/>
        <end position="283"/>
    </location>
</feature>
<feature type="region of interest" description="NMP" evidence="1">
    <location>
        <begin position="94"/>
        <end position="123"/>
    </location>
</feature>
<feature type="region of interest" description="LID" evidence="1">
    <location>
        <begin position="187"/>
        <end position="220"/>
    </location>
</feature>
<feature type="binding site" evidence="1">
    <location>
        <begin position="74"/>
        <end position="79"/>
    </location>
    <ligand>
        <name>ATP</name>
        <dbReference type="ChEBI" id="CHEBI:30616"/>
    </ligand>
</feature>
<feature type="binding site" evidence="1">
    <location>
        <position position="100"/>
    </location>
    <ligand>
        <name>AMP</name>
        <dbReference type="ChEBI" id="CHEBI:456215"/>
    </ligand>
</feature>
<feature type="binding site" evidence="1">
    <location>
        <begin position="121"/>
        <end position="123"/>
    </location>
    <ligand>
        <name>AMP</name>
        <dbReference type="ChEBI" id="CHEBI:456215"/>
    </ligand>
</feature>
<feature type="binding site" evidence="1">
    <location>
        <begin position="150"/>
        <end position="153"/>
    </location>
    <ligand>
        <name>AMP</name>
        <dbReference type="ChEBI" id="CHEBI:456215"/>
    </ligand>
</feature>
<feature type="binding site" evidence="1">
    <location>
        <position position="157"/>
    </location>
    <ligand>
        <name>AMP</name>
        <dbReference type="ChEBI" id="CHEBI:456215"/>
    </ligand>
</feature>
<feature type="binding site" evidence="1">
    <location>
        <position position="188"/>
    </location>
    <ligand>
        <name>ATP</name>
        <dbReference type="ChEBI" id="CHEBI:30616"/>
    </ligand>
</feature>
<feature type="binding site" evidence="1">
    <location>
        <position position="217"/>
    </location>
    <ligand>
        <name>AMP</name>
        <dbReference type="ChEBI" id="CHEBI:456215"/>
    </ligand>
</feature>
<feature type="binding site" evidence="1">
    <location>
        <position position="228"/>
    </location>
    <ligand>
        <name>AMP</name>
        <dbReference type="ChEBI" id="CHEBI:456215"/>
    </ligand>
</feature>
<dbReference type="EC" id="2.7.4.3"/>
<dbReference type="EMBL" id="AB016886">
    <property type="protein sequence ID" value="BAB11331.1"/>
    <property type="molecule type" value="Genomic_DNA"/>
</dbReference>
<dbReference type="EMBL" id="CP002688">
    <property type="protein sequence ID" value="AED95579.1"/>
    <property type="molecule type" value="Genomic_DNA"/>
</dbReference>
<dbReference type="EMBL" id="AY049305">
    <property type="protein sequence ID" value="AAK83647.1"/>
    <property type="molecule type" value="mRNA"/>
</dbReference>
<dbReference type="EMBL" id="BT001036">
    <property type="protein sequence ID" value="AAN46790.1"/>
    <property type="molecule type" value="mRNA"/>
</dbReference>
<dbReference type="SMR" id="Q9FIJ7"/>
<dbReference type="FunCoup" id="Q9FIJ7">
    <property type="interactions" value="1480"/>
</dbReference>
<dbReference type="STRING" id="3702.Q9FIJ7"/>
<dbReference type="iPTMnet" id="Q9FIJ7"/>
<dbReference type="MetOSite" id="Q9FIJ7"/>
<dbReference type="PaxDb" id="3702-AT5G47840.1"/>
<dbReference type="ProteomicsDB" id="250627"/>
<dbReference type="EnsemblPlants" id="AT5G47840.1">
    <property type="protein sequence ID" value="AT5G47840.1"/>
    <property type="gene ID" value="AT5G47840"/>
</dbReference>
<dbReference type="GeneID" id="834835"/>
<dbReference type="Gramene" id="AT5G47840.1">
    <property type="protein sequence ID" value="AT5G47840.1"/>
    <property type="gene ID" value="AT5G47840"/>
</dbReference>
<dbReference type="KEGG" id="ath:AT5G47840"/>
<dbReference type="Araport" id="AT5G47840"/>
<dbReference type="TAIR" id="AT5G47840">
    <property type="gene designation" value="AMK2"/>
</dbReference>
<dbReference type="eggNOG" id="KOG3078">
    <property type="taxonomic scope" value="Eukaryota"/>
</dbReference>
<dbReference type="HOGENOM" id="CLU_032354_6_0_1"/>
<dbReference type="InParanoid" id="Q9FIJ7"/>
<dbReference type="OMA" id="YHEMLDG"/>
<dbReference type="PhylomeDB" id="Q9FIJ7"/>
<dbReference type="BioCyc" id="ARA:AT5G47840-MONOMER"/>
<dbReference type="BRENDA" id="2.7.4.3">
    <property type="organism ID" value="399"/>
</dbReference>
<dbReference type="PRO" id="PR:Q9FIJ7"/>
<dbReference type="Proteomes" id="UP000006548">
    <property type="component" value="Chromosome 5"/>
</dbReference>
<dbReference type="ExpressionAtlas" id="Q9FIJ7">
    <property type="expression patterns" value="baseline and differential"/>
</dbReference>
<dbReference type="GO" id="GO:0009507">
    <property type="term" value="C:chloroplast"/>
    <property type="evidence" value="ECO:0000314"/>
    <property type="project" value="UniProtKB"/>
</dbReference>
<dbReference type="GO" id="GO:0009570">
    <property type="term" value="C:chloroplast stroma"/>
    <property type="evidence" value="ECO:0007005"/>
    <property type="project" value="TAIR"/>
</dbReference>
<dbReference type="GO" id="GO:0009536">
    <property type="term" value="C:plastid"/>
    <property type="evidence" value="ECO:0007005"/>
    <property type="project" value="TAIR"/>
</dbReference>
<dbReference type="GO" id="GO:0004017">
    <property type="term" value="F:adenylate kinase activity"/>
    <property type="evidence" value="ECO:0000314"/>
    <property type="project" value="UniProtKB"/>
</dbReference>
<dbReference type="GO" id="GO:0005524">
    <property type="term" value="F:ATP binding"/>
    <property type="evidence" value="ECO:0007669"/>
    <property type="project" value="UniProtKB-KW"/>
</dbReference>
<dbReference type="GO" id="GO:0097009">
    <property type="term" value="P:energy homeostasis"/>
    <property type="evidence" value="ECO:0000315"/>
    <property type="project" value="UniProtKB"/>
</dbReference>
<dbReference type="CDD" id="cd01428">
    <property type="entry name" value="ADK"/>
    <property type="match status" value="1"/>
</dbReference>
<dbReference type="FunFam" id="3.40.50.300:FF:001694">
    <property type="entry name" value="Adenylate kinase, chloroplastic"/>
    <property type="match status" value="1"/>
</dbReference>
<dbReference type="Gene3D" id="3.40.50.300">
    <property type="entry name" value="P-loop containing nucleotide triphosphate hydrolases"/>
    <property type="match status" value="1"/>
</dbReference>
<dbReference type="HAMAP" id="MF_00235">
    <property type="entry name" value="Adenylate_kinase_Adk"/>
    <property type="match status" value="1"/>
</dbReference>
<dbReference type="InterPro" id="IPR006259">
    <property type="entry name" value="Adenyl_kin_sub"/>
</dbReference>
<dbReference type="InterPro" id="IPR000850">
    <property type="entry name" value="Adenylat/UMP-CMP_kin"/>
</dbReference>
<dbReference type="InterPro" id="IPR033690">
    <property type="entry name" value="Adenylat_kinase_CS"/>
</dbReference>
<dbReference type="InterPro" id="IPR027417">
    <property type="entry name" value="P-loop_NTPase"/>
</dbReference>
<dbReference type="NCBIfam" id="TIGR01351">
    <property type="entry name" value="adk"/>
    <property type="match status" value="1"/>
</dbReference>
<dbReference type="PANTHER" id="PTHR23359">
    <property type="entry name" value="NUCLEOTIDE KINASE"/>
    <property type="match status" value="1"/>
</dbReference>
<dbReference type="Pfam" id="PF00406">
    <property type="entry name" value="ADK"/>
    <property type="match status" value="1"/>
</dbReference>
<dbReference type="PRINTS" id="PR00094">
    <property type="entry name" value="ADENYLTKNASE"/>
</dbReference>
<dbReference type="SUPFAM" id="SSF52540">
    <property type="entry name" value="P-loop containing nucleoside triphosphate hydrolases"/>
    <property type="match status" value="1"/>
</dbReference>
<dbReference type="PROSITE" id="PS00113">
    <property type="entry name" value="ADENYLATE_KINASE"/>
    <property type="match status" value="1"/>
</dbReference>
<reference key="1">
    <citation type="journal article" date="1998" name="DNA Res.">
        <title>Structural analysis of Arabidopsis thaliana chromosome 5. VIII. Sequence features of the regions of 1,081,958 bp covered by seventeen physically assigned P1 and TAC clones.</title>
        <authorList>
            <person name="Asamizu E."/>
            <person name="Sato S."/>
            <person name="Kaneko T."/>
            <person name="Nakamura Y."/>
            <person name="Kotani H."/>
            <person name="Miyajima N."/>
            <person name="Tabata S."/>
        </authorList>
    </citation>
    <scope>NUCLEOTIDE SEQUENCE [LARGE SCALE GENOMIC DNA]</scope>
    <source>
        <strain>cv. Columbia</strain>
    </source>
</reference>
<reference key="2">
    <citation type="journal article" date="2017" name="Plant J.">
        <title>Araport11: a complete reannotation of the Arabidopsis thaliana reference genome.</title>
        <authorList>
            <person name="Cheng C.Y."/>
            <person name="Krishnakumar V."/>
            <person name="Chan A.P."/>
            <person name="Thibaud-Nissen F."/>
            <person name="Schobel S."/>
            <person name="Town C.D."/>
        </authorList>
    </citation>
    <scope>GENOME REANNOTATION</scope>
    <source>
        <strain>cv. Columbia</strain>
    </source>
</reference>
<reference key="3">
    <citation type="journal article" date="2003" name="Science">
        <title>Empirical analysis of transcriptional activity in the Arabidopsis genome.</title>
        <authorList>
            <person name="Yamada K."/>
            <person name="Lim J."/>
            <person name="Dale J.M."/>
            <person name="Chen H."/>
            <person name="Shinn P."/>
            <person name="Palm C.J."/>
            <person name="Southwick A.M."/>
            <person name="Wu H.C."/>
            <person name="Kim C.J."/>
            <person name="Nguyen M."/>
            <person name="Pham P.K."/>
            <person name="Cheuk R.F."/>
            <person name="Karlin-Newmann G."/>
            <person name="Liu S.X."/>
            <person name="Lam B."/>
            <person name="Sakano H."/>
            <person name="Wu T."/>
            <person name="Yu G."/>
            <person name="Miranda M."/>
            <person name="Quach H.L."/>
            <person name="Tripp M."/>
            <person name="Chang C.H."/>
            <person name="Lee J.M."/>
            <person name="Toriumi M.J."/>
            <person name="Chan M.M."/>
            <person name="Tang C.C."/>
            <person name="Onodera C.S."/>
            <person name="Deng J.M."/>
            <person name="Akiyama K."/>
            <person name="Ansari Y."/>
            <person name="Arakawa T."/>
            <person name="Banh J."/>
            <person name="Banno F."/>
            <person name="Bowser L."/>
            <person name="Brooks S.Y."/>
            <person name="Carninci P."/>
            <person name="Chao Q."/>
            <person name="Choy N."/>
            <person name="Enju A."/>
            <person name="Goldsmith A.D."/>
            <person name="Gurjal M."/>
            <person name="Hansen N.F."/>
            <person name="Hayashizaki Y."/>
            <person name="Johnson-Hopson C."/>
            <person name="Hsuan V.W."/>
            <person name="Iida K."/>
            <person name="Karnes M."/>
            <person name="Khan S."/>
            <person name="Koesema E."/>
            <person name="Ishida J."/>
            <person name="Jiang P.X."/>
            <person name="Jones T."/>
            <person name="Kawai J."/>
            <person name="Kamiya A."/>
            <person name="Meyers C."/>
            <person name="Nakajima M."/>
            <person name="Narusaka M."/>
            <person name="Seki M."/>
            <person name="Sakurai T."/>
            <person name="Satou M."/>
            <person name="Tamse R."/>
            <person name="Vaysberg M."/>
            <person name="Wallender E.K."/>
            <person name="Wong C."/>
            <person name="Yamamura Y."/>
            <person name="Yuan S."/>
            <person name="Shinozaki K."/>
            <person name="Davis R.W."/>
            <person name="Theologis A."/>
            <person name="Ecker J.R."/>
        </authorList>
    </citation>
    <scope>NUCLEOTIDE SEQUENCE [LARGE SCALE MRNA]</scope>
    <source>
        <strain>cv. Columbia</strain>
    </source>
</reference>
<reference key="4">
    <citation type="journal article" date="2008" name="Plant Physiol.">
        <title>Functions of chloroplastic adenylate kinases in Arabidopsis.</title>
        <authorList>
            <person name="Lange P.R."/>
            <person name="Geserick C."/>
            <person name="Tischendorf G."/>
            <person name="Zrenner R."/>
        </authorList>
    </citation>
    <scope>FUNCTION</scope>
    <scope>CATALYTIC ACTIVITY</scope>
    <scope>SUBCELLULAR LOCATION</scope>
    <scope>DISRUPTION PHENOTYPE</scope>
</reference>
<keyword id="KW-0067">ATP-binding</keyword>
<keyword id="KW-0150">Chloroplast</keyword>
<keyword id="KW-0418">Kinase</keyword>
<keyword id="KW-0547">Nucleotide-binding</keyword>
<keyword id="KW-0934">Plastid</keyword>
<keyword id="KW-1185">Reference proteome</keyword>
<keyword id="KW-0808">Transferase</keyword>
<keyword id="KW-0809">Transit peptide</keyword>
<accession>Q9FIJ7</accession>
<organism>
    <name type="scientific">Arabidopsis thaliana</name>
    <name type="common">Mouse-ear cress</name>
    <dbReference type="NCBI Taxonomy" id="3702"/>
    <lineage>
        <taxon>Eukaryota</taxon>
        <taxon>Viridiplantae</taxon>
        <taxon>Streptophyta</taxon>
        <taxon>Embryophyta</taxon>
        <taxon>Tracheophyta</taxon>
        <taxon>Spermatophyta</taxon>
        <taxon>Magnoliopsida</taxon>
        <taxon>eudicotyledons</taxon>
        <taxon>Gunneridae</taxon>
        <taxon>Pentapetalae</taxon>
        <taxon>rosids</taxon>
        <taxon>malvids</taxon>
        <taxon>Brassicales</taxon>
        <taxon>Brassicaceae</taxon>
        <taxon>Camelineae</taxon>
        <taxon>Arabidopsis</taxon>
    </lineage>
</organism>
<name>KAD2_ARATH</name>
<evidence type="ECO:0000250" key="1">
    <source>
        <dbReference type="UniProtKB" id="P69441"/>
    </source>
</evidence>
<evidence type="ECO:0000255" key="2"/>
<evidence type="ECO:0000269" key="3">
    <source>
    </source>
</evidence>
<evidence type="ECO:0000305" key="4"/>
<evidence type="ECO:0000305" key="5">
    <source>
    </source>
</evidence>
<proteinExistence type="evidence at protein level"/>
<comment type="function">
    <text evidence="3">Catalyzes the reversible transfer of the terminal phosphate group between ATP and AMP. Plays an important role in cellular energy homeostasis and in adenine nucleotide metabolism. Plays a major role in the equilibration of adenylates and de novo synthesis of ADP in the plastid stroma.</text>
</comment>
<comment type="catalytic activity">
    <reaction evidence="3">
        <text>AMP + ATP = 2 ADP</text>
        <dbReference type="Rhea" id="RHEA:12973"/>
        <dbReference type="ChEBI" id="CHEBI:30616"/>
        <dbReference type="ChEBI" id="CHEBI:456215"/>
        <dbReference type="ChEBI" id="CHEBI:456216"/>
        <dbReference type="EC" id="2.7.4.3"/>
    </reaction>
</comment>
<comment type="subunit">
    <text evidence="1">Monomer.</text>
</comment>
<comment type="subcellular location">
    <subcellularLocation>
        <location evidence="5">Plastid</location>
        <location evidence="5">Chloroplast stroma</location>
    </subcellularLocation>
</comment>
<comment type="disruption phenotype">
    <text evidence="3">Seedling lethality when homozygous, due to loss of chloroplast integrity, causing a bleached phenotype from early embryo to seedling development.</text>
</comment>
<comment type="similarity">
    <text evidence="4">Belongs to the adenylate kinase family.</text>
</comment>
<gene>
    <name type="ordered locus">At5g47840</name>
    <name type="ORF">MCA23.18</name>
</gene>
<sequence>MTGCVNSISPPPVTLYRHRASPSRSSFSLSGDALHSLYRHRRVSRSPSIIAPKFQIVAAEKSEPLKIMISGAPASGKGTQCELITHKYGLVHISAGDLLRAEIASGSENGRRAKEHMEKGQLVPDEIVVMMVKDRLSQTDSEQKGWLLDGYPRSASQATALKGFGFQPDLFIVLEVPEEILIERVVGRRLDPVTGKIYHLKYSPPETEEIAVRLTQRFDDTEEKAKLRLKTHNQNVSDVLSMYDDITIKIEGNRSKEEVFAQIDSSLSELLQERNTAPSSLLS</sequence>
<protein>
    <recommendedName>
        <fullName>Adenylate kinase 2, chloroplastic</fullName>
        <shortName>AK 2</shortName>
        <ecNumber>2.7.4.3</ecNumber>
    </recommendedName>
    <alternativeName>
        <fullName>ATP-AMP transphosphorylase 2</fullName>
    </alternativeName>
    <alternativeName>
        <fullName>ATP:AMP phosphotransferase</fullName>
    </alternativeName>
    <alternativeName>
        <fullName>Adenylate monophosphate kinase 2</fullName>
        <shortName>AMK2</shortName>
    </alternativeName>
</protein>